<keyword id="KW-0285">Flavoprotein</keyword>
<keyword id="KW-0288">FMN</keyword>
<keyword id="KW-0560">Oxidoreductase</keyword>
<reference key="1">
    <citation type="journal article" date="2007" name="Genome Biol.">
        <title>Characterization and modeling of the Haemophilus influenzae core and supragenomes based on the complete genomic sequences of Rd and 12 clinical nontypeable strains.</title>
        <authorList>
            <person name="Hogg J.S."/>
            <person name="Hu F.Z."/>
            <person name="Janto B."/>
            <person name="Boissy R."/>
            <person name="Hayes J."/>
            <person name="Keefe R."/>
            <person name="Post J.C."/>
            <person name="Ehrlich G.D."/>
        </authorList>
    </citation>
    <scope>NUCLEOTIDE SEQUENCE [LARGE SCALE GENOMIC DNA]</scope>
    <source>
        <strain>PittGG</strain>
    </source>
</reference>
<comment type="function">
    <text evidence="1">Conversion of glycerol 3-phosphate to dihydroxyacetone. Uses fumarate or nitrate as electron acceptor.</text>
</comment>
<comment type="catalytic activity">
    <reaction evidence="1">
        <text>a quinone + sn-glycerol 3-phosphate = dihydroxyacetone phosphate + a quinol</text>
        <dbReference type="Rhea" id="RHEA:18977"/>
        <dbReference type="ChEBI" id="CHEBI:24646"/>
        <dbReference type="ChEBI" id="CHEBI:57597"/>
        <dbReference type="ChEBI" id="CHEBI:57642"/>
        <dbReference type="ChEBI" id="CHEBI:132124"/>
        <dbReference type="EC" id="1.1.5.3"/>
    </reaction>
</comment>
<comment type="cofactor">
    <cofactor evidence="1">
        <name>FMN</name>
        <dbReference type="ChEBI" id="CHEBI:58210"/>
    </cofactor>
</comment>
<comment type="pathway">
    <text evidence="1">Polyol metabolism; glycerol degradation via glycerol kinase pathway; glycerone phosphate from sn-glycerol 3-phosphate (anaerobic route): step 1/1.</text>
</comment>
<comment type="subunit">
    <text evidence="1">Composed of a catalytic GlpA/B dimer and of membrane bound GlpC.</text>
</comment>
<comment type="similarity">
    <text evidence="1">Belongs to the anaerobic G-3-P dehydrogenase subunit B family.</text>
</comment>
<accession>A5UHH2</accession>
<dbReference type="EC" id="1.1.5.3" evidence="1"/>
<dbReference type="EMBL" id="CP000672">
    <property type="protein sequence ID" value="ABR00228.1"/>
    <property type="molecule type" value="Genomic_DNA"/>
</dbReference>
<dbReference type="KEGG" id="hiq:CGSHiGG_06720"/>
<dbReference type="HOGENOM" id="CLU_047793_0_0_6"/>
<dbReference type="UniPathway" id="UPA00618">
    <property type="reaction ID" value="UER00673"/>
</dbReference>
<dbReference type="Proteomes" id="UP000001990">
    <property type="component" value="Chromosome"/>
</dbReference>
<dbReference type="GO" id="GO:0009331">
    <property type="term" value="C:glycerol-3-phosphate dehydrogenase (FAD) complex"/>
    <property type="evidence" value="ECO:0007669"/>
    <property type="project" value="InterPro"/>
</dbReference>
<dbReference type="GO" id="GO:0004368">
    <property type="term" value="F:glycerol-3-phosphate dehydrogenase (quinone) activity"/>
    <property type="evidence" value="ECO:0007669"/>
    <property type="project" value="UniProtKB-UniRule"/>
</dbReference>
<dbReference type="GO" id="GO:0019563">
    <property type="term" value="P:glycerol catabolic process"/>
    <property type="evidence" value="ECO:0007669"/>
    <property type="project" value="UniProtKB-UniRule"/>
</dbReference>
<dbReference type="Gene3D" id="3.50.50.60">
    <property type="entry name" value="FAD/NAD(P)-binding domain"/>
    <property type="match status" value="1"/>
</dbReference>
<dbReference type="HAMAP" id="MF_00753">
    <property type="entry name" value="Glycerol3P_GlpB"/>
    <property type="match status" value="1"/>
</dbReference>
<dbReference type="InterPro" id="IPR003953">
    <property type="entry name" value="FAD-dep_OxRdtase_2_FAD-bd"/>
</dbReference>
<dbReference type="InterPro" id="IPR050315">
    <property type="entry name" value="FAD-oxidoreductase_2"/>
</dbReference>
<dbReference type="InterPro" id="IPR036188">
    <property type="entry name" value="FAD/NAD-bd_sf"/>
</dbReference>
<dbReference type="InterPro" id="IPR009158">
    <property type="entry name" value="G3P_DH_GlpB_su"/>
</dbReference>
<dbReference type="NCBIfam" id="TIGR03378">
    <property type="entry name" value="glycerol3P_GlpB"/>
    <property type="match status" value="1"/>
</dbReference>
<dbReference type="NCBIfam" id="NF003719">
    <property type="entry name" value="PRK05329.1-2"/>
    <property type="match status" value="1"/>
</dbReference>
<dbReference type="NCBIfam" id="NF003720">
    <property type="entry name" value="PRK05329.1-3"/>
    <property type="match status" value="1"/>
</dbReference>
<dbReference type="NCBIfam" id="NF003721">
    <property type="entry name" value="PRK05329.1-4"/>
    <property type="match status" value="1"/>
</dbReference>
<dbReference type="PANTHER" id="PTHR43400:SF11">
    <property type="entry name" value="ANAEROBIC GLYCEROL-3-PHOSPHATE DEHYDROGENASE SUBUNIT B"/>
    <property type="match status" value="1"/>
</dbReference>
<dbReference type="PANTHER" id="PTHR43400">
    <property type="entry name" value="FUMARATE REDUCTASE"/>
    <property type="match status" value="1"/>
</dbReference>
<dbReference type="Pfam" id="PF00890">
    <property type="entry name" value="FAD_binding_2"/>
    <property type="match status" value="1"/>
</dbReference>
<dbReference type="PIRSF" id="PIRSF000141">
    <property type="entry name" value="Anaerobic_G3P_dh"/>
    <property type="match status" value="1"/>
</dbReference>
<dbReference type="SUPFAM" id="SSF51905">
    <property type="entry name" value="FAD/NAD(P)-binding domain"/>
    <property type="match status" value="1"/>
</dbReference>
<name>GLPB_HAEIG</name>
<proteinExistence type="inferred from homology"/>
<organism>
    <name type="scientific">Haemophilus influenzae (strain PittGG)</name>
    <dbReference type="NCBI Taxonomy" id="374931"/>
    <lineage>
        <taxon>Bacteria</taxon>
        <taxon>Pseudomonadati</taxon>
        <taxon>Pseudomonadota</taxon>
        <taxon>Gammaproteobacteria</taxon>
        <taxon>Pasteurellales</taxon>
        <taxon>Pasteurellaceae</taxon>
        <taxon>Haemophilus</taxon>
    </lineage>
</organism>
<feature type="chain" id="PRO_1000046605" description="Anaerobic glycerol-3-phosphate dehydrogenase subunit B">
    <location>
        <begin position="1"/>
        <end position="432"/>
    </location>
</feature>
<protein>
    <recommendedName>
        <fullName evidence="1">Anaerobic glycerol-3-phosphate dehydrogenase subunit B</fullName>
        <shortName evidence="1">Anaerobic G-3-P dehydrogenase subunit B</shortName>
        <shortName evidence="1">Anaerobic G3Pdhase B</shortName>
        <ecNumber evidence="1">1.1.5.3</ecNumber>
    </recommendedName>
</protein>
<evidence type="ECO:0000255" key="1">
    <source>
        <dbReference type="HAMAP-Rule" id="MF_00753"/>
    </source>
</evidence>
<gene>
    <name evidence="1" type="primary">glpB</name>
    <name type="ordered locus">CGSHiGG_06720</name>
</gene>
<sequence>MNFDVAIIGGGLAGLTCGIAIQQRGKRCVIINNGQAAIDFASGSLDLLSRMPSTSNGESRTVENLKENITALRNELPAHPYSLLGAEKVLAKAQDFERLANELHLDLIGSTEKNHWRVTGLGSLRGAWLSPNSVPTVQGNELFPHKRIAVLGIEGYHDFQPQLLAANLVLNPQFEHCEVTSGFLNIPQLDELRKNAREFRSVNISQLLEHKLAFKDLVKEIIESSQGAEAVFLPACFGLENQEFMTALRDATKLALFELPTLPPSLLGMRQRIQLRHKFESLGGLMINGDSALNATFEGNKVRCINTRLLEDEEITADNFVLASGSFFSKGLISEFDKIYEPVFESDIIGVEGFNQKDRFTWTVHRFAHPQPYQSAGVAINAQCQVQKCGQFLTNLYAVGNVIGGFNALELGCGSGVAVVTALAVADEILAK</sequence>